<name>TIG_VESOH</name>
<sequence length="429" mass="48710">MKTSLETLKGLSRSLTIDLPIDIFNQKMDKILQKMALEVNIDGFRKGKVPISIVRKRFGNNANSDVINEIVNETLTDALAQVKLTPVAQPVITKVDSNSNKNFSYTVEFEVFPKIKIADFSELSIEQTKVNITKADEQKTLDGLKDRLTEYKAVQCKSKMGDRLSIDFKGLINGETFDGGEAKDFKIVLGKGSMIKGFEEGLIDVAYSSRVVLDLTFPKDYYMDKLASKDVTFEININEIASPKELKLDETFAKKFGEKNMNALRVSMKEQMRVEVDGRIGHLNKNAIFDKLTTANPFNVPQHSIDNEAQNLFKAMQDRMQHQGLSTQGEMPITAFNDEAQRRVKLGLLVNQISRDYKLSVSMKQIDEKLKEISKTYGENAQQMIDFYNQDPTRKSSIELLVVEKMVQDLILDKAQVTFKQKKFQEITQ</sequence>
<gene>
    <name evidence="1" type="primary">tig</name>
    <name type="ordered locus">COSY_0202</name>
</gene>
<reference key="1">
    <citation type="journal article" date="2007" name="Curr. Biol.">
        <title>Reduced genome of the thioautotrophic intracellular symbiont in a deep-sea clam, Calyptogena okutanii.</title>
        <authorList>
            <person name="Kuwahara H."/>
            <person name="Yoshida T."/>
            <person name="Takaki Y."/>
            <person name="Shimamura S."/>
            <person name="Nishi S."/>
            <person name="Harada M."/>
            <person name="Matsuyama K."/>
            <person name="Takishita K."/>
            <person name="Kawato M."/>
            <person name="Uematsu K."/>
            <person name="Fujiwara Y."/>
            <person name="Sato T."/>
            <person name="Kato C."/>
            <person name="Kitagawa M."/>
            <person name="Kato I."/>
            <person name="Maruyama T."/>
        </authorList>
    </citation>
    <scope>NUCLEOTIDE SEQUENCE [LARGE SCALE GENOMIC DNA]</scope>
    <source>
        <strain>HA</strain>
    </source>
</reference>
<protein>
    <recommendedName>
        <fullName evidence="1">Trigger factor</fullName>
        <shortName evidence="1">TF</shortName>
        <ecNumber evidence="1">5.2.1.8</ecNumber>
    </recommendedName>
    <alternativeName>
        <fullName evidence="1">PPIase</fullName>
    </alternativeName>
</protein>
<dbReference type="EC" id="5.2.1.8" evidence="1"/>
<dbReference type="EMBL" id="AP009247">
    <property type="protein sequence ID" value="BAF61332.1"/>
    <property type="molecule type" value="Genomic_DNA"/>
</dbReference>
<dbReference type="RefSeq" id="WP_011929602.1">
    <property type="nucleotide sequence ID" value="NC_009465.1"/>
</dbReference>
<dbReference type="SMR" id="A5CXJ7"/>
<dbReference type="STRING" id="412965.COSY_0202"/>
<dbReference type="KEGG" id="vok:COSY_0202"/>
<dbReference type="eggNOG" id="COG0544">
    <property type="taxonomic scope" value="Bacteria"/>
</dbReference>
<dbReference type="HOGENOM" id="CLU_033058_2_0_6"/>
<dbReference type="OrthoDB" id="9767721at2"/>
<dbReference type="Proteomes" id="UP000000247">
    <property type="component" value="Chromosome"/>
</dbReference>
<dbReference type="GO" id="GO:0005737">
    <property type="term" value="C:cytoplasm"/>
    <property type="evidence" value="ECO:0007669"/>
    <property type="project" value="UniProtKB-SubCell"/>
</dbReference>
<dbReference type="GO" id="GO:0003755">
    <property type="term" value="F:peptidyl-prolyl cis-trans isomerase activity"/>
    <property type="evidence" value="ECO:0007669"/>
    <property type="project" value="UniProtKB-UniRule"/>
</dbReference>
<dbReference type="GO" id="GO:0044183">
    <property type="term" value="F:protein folding chaperone"/>
    <property type="evidence" value="ECO:0007669"/>
    <property type="project" value="TreeGrafter"/>
</dbReference>
<dbReference type="GO" id="GO:0043022">
    <property type="term" value="F:ribosome binding"/>
    <property type="evidence" value="ECO:0007669"/>
    <property type="project" value="TreeGrafter"/>
</dbReference>
<dbReference type="GO" id="GO:0051083">
    <property type="term" value="P:'de novo' cotranslational protein folding"/>
    <property type="evidence" value="ECO:0007669"/>
    <property type="project" value="TreeGrafter"/>
</dbReference>
<dbReference type="GO" id="GO:0051301">
    <property type="term" value="P:cell division"/>
    <property type="evidence" value="ECO:0007669"/>
    <property type="project" value="UniProtKB-KW"/>
</dbReference>
<dbReference type="GO" id="GO:0061077">
    <property type="term" value="P:chaperone-mediated protein folding"/>
    <property type="evidence" value="ECO:0007669"/>
    <property type="project" value="TreeGrafter"/>
</dbReference>
<dbReference type="GO" id="GO:0015031">
    <property type="term" value="P:protein transport"/>
    <property type="evidence" value="ECO:0007669"/>
    <property type="project" value="UniProtKB-UniRule"/>
</dbReference>
<dbReference type="GO" id="GO:0043335">
    <property type="term" value="P:protein unfolding"/>
    <property type="evidence" value="ECO:0007669"/>
    <property type="project" value="TreeGrafter"/>
</dbReference>
<dbReference type="FunFam" id="3.10.50.40:FF:000001">
    <property type="entry name" value="Trigger factor"/>
    <property type="match status" value="1"/>
</dbReference>
<dbReference type="Gene3D" id="3.10.50.40">
    <property type="match status" value="1"/>
</dbReference>
<dbReference type="Gene3D" id="3.30.70.1050">
    <property type="entry name" value="Trigger factor ribosome-binding domain"/>
    <property type="match status" value="1"/>
</dbReference>
<dbReference type="Gene3D" id="1.10.3120.10">
    <property type="entry name" value="Trigger factor, C-terminal domain"/>
    <property type="match status" value="1"/>
</dbReference>
<dbReference type="HAMAP" id="MF_00303">
    <property type="entry name" value="Trigger_factor_Tig"/>
    <property type="match status" value="1"/>
</dbReference>
<dbReference type="InterPro" id="IPR046357">
    <property type="entry name" value="PPIase_dom_sf"/>
</dbReference>
<dbReference type="InterPro" id="IPR001179">
    <property type="entry name" value="PPIase_FKBP_dom"/>
</dbReference>
<dbReference type="InterPro" id="IPR005215">
    <property type="entry name" value="Trig_fac"/>
</dbReference>
<dbReference type="InterPro" id="IPR008880">
    <property type="entry name" value="Trigger_fac_C"/>
</dbReference>
<dbReference type="InterPro" id="IPR037041">
    <property type="entry name" value="Trigger_fac_C_sf"/>
</dbReference>
<dbReference type="InterPro" id="IPR008881">
    <property type="entry name" value="Trigger_fac_ribosome-bd_bac"/>
</dbReference>
<dbReference type="InterPro" id="IPR036611">
    <property type="entry name" value="Trigger_fac_ribosome-bd_sf"/>
</dbReference>
<dbReference type="InterPro" id="IPR027304">
    <property type="entry name" value="Trigger_fact/SurA_dom_sf"/>
</dbReference>
<dbReference type="NCBIfam" id="TIGR00115">
    <property type="entry name" value="tig"/>
    <property type="match status" value="1"/>
</dbReference>
<dbReference type="PANTHER" id="PTHR30560">
    <property type="entry name" value="TRIGGER FACTOR CHAPERONE AND PEPTIDYL-PROLYL CIS/TRANS ISOMERASE"/>
    <property type="match status" value="1"/>
</dbReference>
<dbReference type="PANTHER" id="PTHR30560:SF3">
    <property type="entry name" value="TRIGGER FACTOR-LIKE PROTEIN TIG, CHLOROPLASTIC"/>
    <property type="match status" value="1"/>
</dbReference>
<dbReference type="Pfam" id="PF00254">
    <property type="entry name" value="FKBP_C"/>
    <property type="match status" value="1"/>
</dbReference>
<dbReference type="Pfam" id="PF05698">
    <property type="entry name" value="Trigger_C"/>
    <property type="match status" value="1"/>
</dbReference>
<dbReference type="Pfam" id="PF05697">
    <property type="entry name" value="Trigger_N"/>
    <property type="match status" value="1"/>
</dbReference>
<dbReference type="PIRSF" id="PIRSF003095">
    <property type="entry name" value="Trigger_factor"/>
    <property type="match status" value="1"/>
</dbReference>
<dbReference type="SUPFAM" id="SSF54534">
    <property type="entry name" value="FKBP-like"/>
    <property type="match status" value="1"/>
</dbReference>
<dbReference type="SUPFAM" id="SSF109998">
    <property type="entry name" value="Triger factor/SurA peptide-binding domain-like"/>
    <property type="match status" value="1"/>
</dbReference>
<dbReference type="SUPFAM" id="SSF102735">
    <property type="entry name" value="Trigger factor ribosome-binding domain"/>
    <property type="match status" value="1"/>
</dbReference>
<dbReference type="PROSITE" id="PS50059">
    <property type="entry name" value="FKBP_PPIASE"/>
    <property type="match status" value="1"/>
</dbReference>
<evidence type="ECO:0000255" key="1">
    <source>
        <dbReference type="HAMAP-Rule" id="MF_00303"/>
    </source>
</evidence>
<accession>A5CXJ7</accession>
<comment type="function">
    <text evidence="1">Involved in protein export. Acts as a chaperone by maintaining the newly synthesized protein in an open conformation. Functions as a peptidyl-prolyl cis-trans isomerase.</text>
</comment>
<comment type="catalytic activity">
    <reaction evidence="1">
        <text>[protein]-peptidylproline (omega=180) = [protein]-peptidylproline (omega=0)</text>
        <dbReference type="Rhea" id="RHEA:16237"/>
        <dbReference type="Rhea" id="RHEA-COMP:10747"/>
        <dbReference type="Rhea" id="RHEA-COMP:10748"/>
        <dbReference type="ChEBI" id="CHEBI:83833"/>
        <dbReference type="ChEBI" id="CHEBI:83834"/>
        <dbReference type="EC" id="5.2.1.8"/>
    </reaction>
</comment>
<comment type="subcellular location">
    <subcellularLocation>
        <location>Cytoplasm</location>
    </subcellularLocation>
    <text evidence="1">About half TF is bound to the ribosome near the polypeptide exit tunnel while the other half is free in the cytoplasm.</text>
</comment>
<comment type="domain">
    <text evidence="1">Consists of 3 domains; the N-terminus binds the ribosome, the middle domain has PPIase activity, while the C-terminus has intrinsic chaperone activity on its own.</text>
</comment>
<comment type="similarity">
    <text evidence="1">Belongs to the FKBP-type PPIase family. Tig subfamily.</text>
</comment>
<organism>
    <name type="scientific">Vesicomyosocius okutanii subsp. Calyptogena okutanii (strain HA)</name>
    <dbReference type="NCBI Taxonomy" id="412965"/>
    <lineage>
        <taxon>Bacteria</taxon>
        <taxon>Pseudomonadati</taxon>
        <taxon>Pseudomonadota</taxon>
        <taxon>Gammaproteobacteria</taxon>
        <taxon>Candidatus Pseudothioglobaceae</taxon>
        <taxon>Candidatus Vesicomyosocius</taxon>
    </lineage>
</organism>
<keyword id="KW-0131">Cell cycle</keyword>
<keyword id="KW-0132">Cell division</keyword>
<keyword id="KW-0143">Chaperone</keyword>
<keyword id="KW-0963">Cytoplasm</keyword>
<keyword id="KW-0413">Isomerase</keyword>
<keyword id="KW-1185">Reference proteome</keyword>
<keyword id="KW-0697">Rotamase</keyword>
<proteinExistence type="inferred from homology"/>
<feature type="chain" id="PRO_1000022780" description="Trigger factor">
    <location>
        <begin position="1"/>
        <end position="429"/>
    </location>
</feature>
<feature type="domain" description="PPIase FKBP-type" evidence="1">
    <location>
        <begin position="161"/>
        <end position="246"/>
    </location>
</feature>